<name>CCME_ECOLC</name>
<proteinExistence type="inferred from homology"/>
<evidence type="ECO:0000255" key="1">
    <source>
        <dbReference type="HAMAP-Rule" id="MF_01959"/>
    </source>
</evidence>
<evidence type="ECO:0000256" key="2">
    <source>
        <dbReference type="SAM" id="MobiDB-lite"/>
    </source>
</evidence>
<gene>
    <name evidence="1" type="primary">ccmE</name>
    <name evidence="1" type="synonym">cycJ</name>
    <name type="ordered locus">EcolC_1453</name>
</gene>
<protein>
    <recommendedName>
        <fullName evidence="1">Cytochrome c-type biogenesis protein CcmE</fullName>
    </recommendedName>
    <alternativeName>
        <fullName evidence="1">Cytochrome c maturation protein E</fullName>
    </alternativeName>
    <alternativeName>
        <fullName evidence="1">Heme chaperone CcmE</fullName>
    </alternativeName>
</protein>
<comment type="function">
    <text evidence="1">Heme chaperone required for the biogenesis of c-type cytochromes. Transiently binds heme delivered by CcmC and transfers the heme to apo-cytochromes in a process facilitated by CcmF and CcmH.</text>
</comment>
<comment type="subcellular location">
    <subcellularLocation>
        <location evidence="1">Cell inner membrane</location>
        <topology evidence="1">Single-pass type II membrane protein</topology>
        <orientation evidence="1">Periplasmic side</orientation>
    </subcellularLocation>
</comment>
<comment type="similarity">
    <text evidence="1">Belongs to the CcmE/CycJ family.</text>
</comment>
<sequence length="159" mass="17698">MNIRRKNRLWIACAVLAGLALTIGLVLYALRSNIDLFYTPGEILYGKRETQQMPEVGQRLRVGGMVMPGSVQRDPNSLKVTFTIYDAEGSVDVSYEGILPDLFREGQGVVVQGELEKGNHILAKEVLAKHDENYTPPEVEKAMEANHRRPASVYKDPAS</sequence>
<dbReference type="EMBL" id="CP000946">
    <property type="protein sequence ID" value="ACA77116.1"/>
    <property type="molecule type" value="Genomic_DNA"/>
</dbReference>
<dbReference type="RefSeq" id="WP_001026418.1">
    <property type="nucleotide sequence ID" value="NZ_MTFT01000031.1"/>
</dbReference>
<dbReference type="BMRB" id="B1IY75"/>
<dbReference type="SMR" id="B1IY75"/>
<dbReference type="GeneID" id="86860369"/>
<dbReference type="KEGG" id="ecl:EcolC_1453"/>
<dbReference type="HOGENOM" id="CLU_079503_1_0_6"/>
<dbReference type="GO" id="GO:0005886">
    <property type="term" value="C:plasma membrane"/>
    <property type="evidence" value="ECO:0007669"/>
    <property type="project" value="UniProtKB-SubCell"/>
</dbReference>
<dbReference type="GO" id="GO:0020037">
    <property type="term" value="F:heme binding"/>
    <property type="evidence" value="ECO:0007669"/>
    <property type="project" value="InterPro"/>
</dbReference>
<dbReference type="GO" id="GO:0046872">
    <property type="term" value="F:metal ion binding"/>
    <property type="evidence" value="ECO:0007669"/>
    <property type="project" value="UniProtKB-KW"/>
</dbReference>
<dbReference type="GO" id="GO:0017004">
    <property type="term" value="P:cytochrome complex assembly"/>
    <property type="evidence" value="ECO:0007669"/>
    <property type="project" value="UniProtKB-KW"/>
</dbReference>
<dbReference type="FunFam" id="2.40.50.140:FF:000104">
    <property type="entry name" value="Cytochrome c-type biogenesis protein CcmE"/>
    <property type="match status" value="1"/>
</dbReference>
<dbReference type="Gene3D" id="2.40.50.140">
    <property type="entry name" value="Nucleic acid-binding proteins"/>
    <property type="match status" value="1"/>
</dbReference>
<dbReference type="HAMAP" id="MF_01959">
    <property type="entry name" value="CcmE"/>
    <property type="match status" value="1"/>
</dbReference>
<dbReference type="InterPro" id="IPR004329">
    <property type="entry name" value="CcmE"/>
</dbReference>
<dbReference type="InterPro" id="IPR036127">
    <property type="entry name" value="CcmE-like_sf"/>
</dbReference>
<dbReference type="InterPro" id="IPR012340">
    <property type="entry name" value="NA-bd_OB-fold"/>
</dbReference>
<dbReference type="NCBIfam" id="NF009635">
    <property type="entry name" value="PRK13150.1"/>
    <property type="match status" value="1"/>
</dbReference>
<dbReference type="NCBIfam" id="NF009638">
    <property type="entry name" value="PRK13165.1"/>
    <property type="match status" value="1"/>
</dbReference>
<dbReference type="NCBIfam" id="NF009727">
    <property type="entry name" value="PRK13254.1-1"/>
    <property type="match status" value="1"/>
</dbReference>
<dbReference type="NCBIfam" id="NF009729">
    <property type="entry name" value="PRK13254.1-3"/>
    <property type="match status" value="1"/>
</dbReference>
<dbReference type="PANTHER" id="PTHR34128">
    <property type="entry name" value="CYTOCHROME C-TYPE BIOGENESIS PROTEIN CCME HOMOLOG, MITOCHONDRIAL"/>
    <property type="match status" value="1"/>
</dbReference>
<dbReference type="PANTHER" id="PTHR34128:SF2">
    <property type="entry name" value="CYTOCHROME C-TYPE BIOGENESIS PROTEIN CCME HOMOLOG, MITOCHONDRIAL"/>
    <property type="match status" value="1"/>
</dbReference>
<dbReference type="Pfam" id="PF03100">
    <property type="entry name" value="CcmE"/>
    <property type="match status" value="1"/>
</dbReference>
<dbReference type="SUPFAM" id="SSF82093">
    <property type="entry name" value="Heme chaperone CcmE"/>
    <property type="match status" value="1"/>
</dbReference>
<accession>B1IY75</accession>
<feature type="chain" id="PRO_1000088525" description="Cytochrome c-type biogenesis protein CcmE">
    <location>
        <begin position="1"/>
        <end position="159"/>
    </location>
</feature>
<feature type="topological domain" description="Cytoplasmic" evidence="1">
    <location>
        <begin position="1"/>
        <end position="8"/>
    </location>
</feature>
<feature type="transmembrane region" description="Helical; Signal-anchor for type II membrane protein" evidence="1">
    <location>
        <begin position="9"/>
        <end position="29"/>
    </location>
</feature>
<feature type="topological domain" description="Periplasmic" evidence="1">
    <location>
        <begin position="30"/>
        <end position="159"/>
    </location>
</feature>
<feature type="region of interest" description="Disordered" evidence="2">
    <location>
        <begin position="132"/>
        <end position="159"/>
    </location>
</feature>
<feature type="compositionally biased region" description="Basic and acidic residues" evidence="2">
    <location>
        <begin position="132"/>
        <end position="147"/>
    </location>
</feature>
<feature type="binding site" description="covalent" evidence="1">
    <location>
        <position position="130"/>
    </location>
    <ligand>
        <name>heme</name>
        <dbReference type="ChEBI" id="CHEBI:30413"/>
    </ligand>
</feature>
<feature type="binding site" description="axial binding residue" evidence="1">
    <location>
        <position position="134"/>
    </location>
    <ligand>
        <name>heme</name>
        <dbReference type="ChEBI" id="CHEBI:30413"/>
    </ligand>
    <ligandPart>
        <name>Fe</name>
        <dbReference type="ChEBI" id="CHEBI:18248"/>
    </ligandPart>
</feature>
<organism>
    <name type="scientific">Escherichia coli (strain ATCC 8739 / DSM 1576 / NBRC 3972 / NCIMB 8545 / WDCM 00012 / Crooks)</name>
    <dbReference type="NCBI Taxonomy" id="481805"/>
    <lineage>
        <taxon>Bacteria</taxon>
        <taxon>Pseudomonadati</taxon>
        <taxon>Pseudomonadota</taxon>
        <taxon>Gammaproteobacteria</taxon>
        <taxon>Enterobacterales</taxon>
        <taxon>Enterobacteriaceae</taxon>
        <taxon>Escherichia</taxon>
    </lineage>
</organism>
<keyword id="KW-0997">Cell inner membrane</keyword>
<keyword id="KW-1003">Cell membrane</keyword>
<keyword id="KW-0201">Cytochrome c-type biogenesis</keyword>
<keyword id="KW-0349">Heme</keyword>
<keyword id="KW-0408">Iron</keyword>
<keyword id="KW-0472">Membrane</keyword>
<keyword id="KW-0479">Metal-binding</keyword>
<keyword id="KW-0735">Signal-anchor</keyword>
<keyword id="KW-0812">Transmembrane</keyword>
<keyword id="KW-1133">Transmembrane helix</keyword>
<reference key="1">
    <citation type="submission" date="2008-02" db="EMBL/GenBank/DDBJ databases">
        <title>Complete sequence of Escherichia coli C str. ATCC 8739.</title>
        <authorList>
            <person name="Copeland A."/>
            <person name="Lucas S."/>
            <person name="Lapidus A."/>
            <person name="Glavina del Rio T."/>
            <person name="Dalin E."/>
            <person name="Tice H."/>
            <person name="Bruce D."/>
            <person name="Goodwin L."/>
            <person name="Pitluck S."/>
            <person name="Kiss H."/>
            <person name="Brettin T."/>
            <person name="Detter J.C."/>
            <person name="Han C."/>
            <person name="Kuske C.R."/>
            <person name="Schmutz J."/>
            <person name="Larimer F."/>
            <person name="Land M."/>
            <person name="Hauser L."/>
            <person name="Kyrpides N."/>
            <person name="Mikhailova N."/>
            <person name="Ingram L."/>
            <person name="Richardson P."/>
        </authorList>
    </citation>
    <scope>NUCLEOTIDE SEQUENCE [LARGE SCALE GENOMIC DNA]</scope>
    <source>
        <strain>ATCC 8739 / DSM 1576 / NBRC 3972 / NCIMB 8545 / WDCM 00012 / Crooks</strain>
    </source>
</reference>